<sequence length="843" mass="97289">MSRPLSDQEKRKQISVRGLAGVENVTELKKNFNRHLHFTLVKDRNVATPRDYYFALAHTVRDHLVGRWIRTQQHYYEKDPKRIYYLSLEFYMGRTLQNTMVNLALENACDEATYQLGLDMEELEEIEEDAGLGNGGLGRLAACFLDSMATLGLAAYGYGIRYEFGIFNQKICGGWQMEEADDWLRYGNPWEKARPEFTLPVHFYGRVEHTSQGAKWVDTQVVLAMPYDTPVPGYRNNVVNTMRLWSAKAPNDFNLKDFNVGGYIQAVLDRNLAENISRVLYPNDNFFEGKELRLKQEYFVVAATLQDIIRRFKSSKFGCRDPVRTNFDAFPDKVAIQLNDTHPSLAIPELMRVLVDLERLDWDKAWEVTVKTCAYTNHTVLPEALERWPVHLLETLLPRHLQIIYEINQRFLNRVAAAFPGDVDRLRRMSLVEEGAVKRINMAHLCIAGSHAVNGVARIHSEILKKTIFKDFYELEPHKFQNKTNGITPRRWLVLCNPGLAEIIAERIGEEYISDLDQLRKLLSYVDDEAFIRDVAKVKQENKLKFAAYLEREYKVHINPNSLFDVQVKRIHEYKRQLLNCLHVITLYNRIKKEPNKFVVPRTVMIGGKAAPGYHMAKMIIKLITAIGDVVNHDPVVGDRLRVIFLENYRVSLAEKVIPAADLSEQISTAGTEASGTGNMKFMLNGALTIGTMDGANVEMAEEAGEENFFIFGMRVEDVDRLDQRGYNAQEYYDRIPELRQIIEQLSSGFFSPKQPDLFKDIVNMLMHHDRFKVFADYEEYVKCQERVSALYKNPREWTRMVIRNIATSGKFSSDRTIAQYAREIWGVEPSRQRLPAPDEKIP</sequence>
<dbReference type="EC" id="2.4.1.1" evidence="2"/>
<dbReference type="EMBL" id="D00040">
    <property type="protein sequence ID" value="BAA00027.1"/>
    <property type="molecule type" value="mRNA"/>
</dbReference>
<dbReference type="EMBL" id="X04265">
    <property type="protein sequence ID" value="CAA27816.1"/>
    <property type="molecule type" value="mRNA"/>
</dbReference>
<dbReference type="EMBL" id="X03030">
    <property type="protein sequence ID" value="CAA26833.1"/>
    <property type="molecule type" value="mRNA"/>
</dbReference>
<dbReference type="PIR" id="A24302">
    <property type="entry name" value="PHRBG"/>
</dbReference>
<dbReference type="RefSeq" id="NP_001075653.1">
    <property type="nucleotide sequence ID" value="NM_001082184.1"/>
</dbReference>
<dbReference type="PDB" id="1A8I">
    <property type="method" value="X-ray"/>
    <property type="resolution" value="1.78 A"/>
    <property type="chains" value="A=2-843"/>
</dbReference>
<dbReference type="PDB" id="1ABB">
    <property type="method" value="X-ray"/>
    <property type="resolution" value="2.80 A"/>
    <property type="chains" value="A/B/C/D=11-838"/>
</dbReference>
<dbReference type="PDB" id="1AXR">
    <property type="method" value="X-ray"/>
    <property type="resolution" value="2.30 A"/>
    <property type="chains" value="A=2-843"/>
</dbReference>
<dbReference type="PDB" id="1B4D">
    <property type="method" value="X-ray"/>
    <property type="resolution" value="2.00 A"/>
    <property type="chains" value="A=2-843"/>
</dbReference>
<dbReference type="PDB" id="1BX3">
    <property type="method" value="X-ray"/>
    <property type="resolution" value="2.30 A"/>
    <property type="chains" value="A=2-843"/>
</dbReference>
<dbReference type="PDB" id="1C50">
    <property type="method" value="X-ray"/>
    <property type="resolution" value="2.30 A"/>
    <property type="chains" value="A=14-843"/>
</dbReference>
<dbReference type="PDB" id="1C8K">
    <property type="method" value="X-ray"/>
    <property type="resolution" value="1.76 A"/>
    <property type="chains" value="A=2-843"/>
</dbReference>
<dbReference type="PDB" id="1C8L">
    <property type="method" value="X-ray"/>
    <property type="resolution" value="2.30 A"/>
    <property type="chains" value="A=2-843"/>
</dbReference>
<dbReference type="PDB" id="1E1Y">
    <property type="method" value="X-ray"/>
    <property type="resolution" value="2.23 A"/>
    <property type="chains" value="A=2-843"/>
</dbReference>
<dbReference type="PDB" id="1FS4">
    <property type="method" value="X-ray"/>
    <property type="resolution" value="2.38 A"/>
    <property type="chains" value="A=2-843"/>
</dbReference>
<dbReference type="PDB" id="1FTQ">
    <property type="method" value="X-ray"/>
    <property type="resolution" value="2.35 A"/>
    <property type="chains" value="A=2-843"/>
</dbReference>
<dbReference type="PDB" id="1FTW">
    <property type="method" value="X-ray"/>
    <property type="resolution" value="2.36 A"/>
    <property type="chains" value="A=2-843"/>
</dbReference>
<dbReference type="PDB" id="1FTY">
    <property type="method" value="X-ray"/>
    <property type="resolution" value="2.38 A"/>
    <property type="chains" value="A=2-843"/>
</dbReference>
<dbReference type="PDB" id="1FU4">
    <property type="method" value="X-ray"/>
    <property type="resolution" value="2.36 A"/>
    <property type="chains" value="A=2-843"/>
</dbReference>
<dbReference type="PDB" id="1FU7">
    <property type="method" value="X-ray"/>
    <property type="resolution" value="2.36 A"/>
    <property type="chains" value="A=2-843"/>
</dbReference>
<dbReference type="PDB" id="1FU8">
    <property type="method" value="X-ray"/>
    <property type="resolution" value="2.35 A"/>
    <property type="chains" value="A=2-843"/>
</dbReference>
<dbReference type="PDB" id="1GFZ">
    <property type="method" value="X-ray"/>
    <property type="resolution" value="2.30 A"/>
    <property type="chains" value="A=2-843"/>
</dbReference>
<dbReference type="PDB" id="1GG8">
    <property type="method" value="X-ray"/>
    <property type="resolution" value="2.31 A"/>
    <property type="chains" value="A=2-843"/>
</dbReference>
<dbReference type="PDB" id="1GGN">
    <property type="method" value="X-ray"/>
    <property type="resolution" value="2.36 A"/>
    <property type="chains" value="A=2-843"/>
</dbReference>
<dbReference type="PDB" id="1GPA">
    <property type="method" value="X-ray"/>
    <property type="resolution" value="2.90 A"/>
    <property type="chains" value="A/B/C/D=2-843"/>
</dbReference>
<dbReference type="PDB" id="1GPB">
    <property type="method" value="X-ray"/>
    <property type="resolution" value="1.90 A"/>
    <property type="chains" value="A=2-843"/>
</dbReference>
<dbReference type="PDB" id="1GPY">
    <property type="method" value="X-ray"/>
    <property type="resolution" value="2.40 A"/>
    <property type="chains" value="A=2-843"/>
</dbReference>
<dbReference type="PDB" id="1H5U">
    <property type="method" value="X-ray"/>
    <property type="resolution" value="1.76 A"/>
    <property type="chains" value="A=2-843"/>
</dbReference>
<dbReference type="PDB" id="1HLF">
    <property type="method" value="X-ray"/>
    <property type="resolution" value="2.26 A"/>
    <property type="chains" value="A=2-843"/>
</dbReference>
<dbReference type="PDB" id="1K06">
    <property type="method" value="X-ray"/>
    <property type="resolution" value="1.80 A"/>
    <property type="chains" value="A=2-843"/>
</dbReference>
<dbReference type="PDB" id="1K08">
    <property type="method" value="X-ray"/>
    <property type="resolution" value="2.26 A"/>
    <property type="chains" value="A=2-843"/>
</dbReference>
<dbReference type="PDB" id="1KTI">
    <property type="method" value="X-ray"/>
    <property type="resolution" value="1.97 A"/>
    <property type="chains" value="A=2-843"/>
</dbReference>
<dbReference type="PDB" id="1LWN">
    <property type="method" value="X-ray"/>
    <property type="resolution" value="2.00 A"/>
    <property type="chains" value="A=2-843"/>
</dbReference>
<dbReference type="PDB" id="1LWO">
    <property type="method" value="X-ray"/>
    <property type="resolution" value="2.00 A"/>
    <property type="chains" value="A=2-843"/>
</dbReference>
<dbReference type="PDB" id="1NOI">
    <property type="method" value="X-ray"/>
    <property type="resolution" value="2.50 A"/>
    <property type="chains" value="A/B/C/D=2-843"/>
</dbReference>
<dbReference type="PDB" id="1NOJ">
    <property type="method" value="X-ray"/>
    <property type="resolution" value="2.40 A"/>
    <property type="chains" value="A=2-843"/>
</dbReference>
<dbReference type="PDB" id="1NOK">
    <property type="method" value="X-ray"/>
    <property type="resolution" value="2.40 A"/>
    <property type="chains" value="A=2-843"/>
</dbReference>
<dbReference type="PDB" id="1P29">
    <property type="method" value="X-ray"/>
    <property type="resolution" value="2.20 A"/>
    <property type="chains" value="A=2-843"/>
</dbReference>
<dbReference type="PDB" id="1P2B">
    <property type="method" value="X-ray"/>
    <property type="resolution" value="2.20 A"/>
    <property type="chains" value="A=2-843"/>
</dbReference>
<dbReference type="PDB" id="1P2D">
    <property type="method" value="X-ray"/>
    <property type="resolution" value="1.94 A"/>
    <property type="chains" value="A=2-843"/>
</dbReference>
<dbReference type="PDB" id="1P2G">
    <property type="method" value="X-ray"/>
    <property type="resolution" value="2.30 A"/>
    <property type="chains" value="A=2-843"/>
</dbReference>
<dbReference type="PDB" id="1P4G">
    <property type="method" value="X-ray"/>
    <property type="resolution" value="2.10 A"/>
    <property type="chains" value="A=2-843"/>
</dbReference>
<dbReference type="PDB" id="1P4H">
    <property type="method" value="X-ray"/>
    <property type="resolution" value="2.06 A"/>
    <property type="chains" value="A=2-843"/>
</dbReference>
<dbReference type="PDB" id="1P4J">
    <property type="method" value="X-ray"/>
    <property type="resolution" value="2.00 A"/>
    <property type="chains" value="A=2-843"/>
</dbReference>
<dbReference type="PDB" id="1PYG">
    <property type="method" value="X-ray"/>
    <property type="resolution" value="2.87 A"/>
    <property type="chains" value="A/B/C/D=2-843"/>
</dbReference>
<dbReference type="PDB" id="1UZU">
    <property type="method" value="X-ray"/>
    <property type="resolution" value="2.30 A"/>
    <property type="chains" value="A=2-843"/>
</dbReference>
<dbReference type="PDB" id="1WUT">
    <property type="method" value="X-ray"/>
    <property type="resolution" value="2.26 A"/>
    <property type="chains" value="A=2-843"/>
</dbReference>
<dbReference type="PDB" id="1WUY">
    <property type="method" value="X-ray"/>
    <property type="resolution" value="2.26 A"/>
    <property type="chains" value="A=2-843"/>
</dbReference>
<dbReference type="PDB" id="1WV0">
    <property type="method" value="X-ray"/>
    <property type="resolution" value="2.26 A"/>
    <property type="chains" value="A=2-843"/>
</dbReference>
<dbReference type="PDB" id="1WV1">
    <property type="method" value="X-ray"/>
    <property type="resolution" value="2.26 A"/>
    <property type="chains" value="A=2-843"/>
</dbReference>
<dbReference type="PDB" id="1WW2">
    <property type="method" value="X-ray"/>
    <property type="resolution" value="1.90 A"/>
    <property type="chains" value="A=2-843"/>
</dbReference>
<dbReference type="PDB" id="1WW3">
    <property type="method" value="X-ray"/>
    <property type="resolution" value="1.80 A"/>
    <property type="chains" value="A=2-843"/>
</dbReference>
<dbReference type="PDB" id="1XC7">
    <property type="method" value="X-ray"/>
    <property type="resolution" value="1.83 A"/>
    <property type="chains" value="A=2-843"/>
</dbReference>
<dbReference type="PDB" id="1XKX">
    <property type="method" value="X-ray"/>
    <property type="resolution" value="1.93 A"/>
    <property type="chains" value="A=2-843"/>
</dbReference>
<dbReference type="PDB" id="1XL0">
    <property type="method" value="X-ray"/>
    <property type="resolution" value="1.92 A"/>
    <property type="chains" value="A=2-843"/>
</dbReference>
<dbReference type="PDB" id="1XL1">
    <property type="method" value="X-ray"/>
    <property type="resolution" value="2.10 A"/>
    <property type="chains" value="A=2-843"/>
</dbReference>
<dbReference type="PDB" id="1Z62">
    <property type="method" value="X-ray"/>
    <property type="resolution" value="1.90 A"/>
    <property type="chains" value="A=2-843"/>
</dbReference>
<dbReference type="PDB" id="1Z6P">
    <property type="method" value="X-ray"/>
    <property type="resolution" value="2.40 A"/>
    <property type="chains" value="A=2-843"/>
</dbReference>
<dbReference type="PDB" id="1Z6Q">
    <property type="method" value="X-ray"/>
    <property type="resolution" value="2.03 A"/>
    <property type="chains" value="A=2-843"/>
</dbReference>
<dbReference type="PDB" id="2AMV">
    <property type="method" value="X-ray"/>
    <property type="resolution" value="2.30 A"/>
    <property type="chains" value="A=2-843"/>
</dbReference>
<dbReference type="PDB" id="2F3P">
    <property type="method" value="X-ray"/>
    <property type="resolution" value="1.94 A"/>
    <property type="chains" value="A=2-843"/>
</dbReference>
<dbReference type="PDB" id="2F3Q">
    <property type="method" value="X-ray"/>
    <property type="resolution" value="1.96 A"/>
    <property type="chains" value="A=2-843"/>
</dbReference>
<dbReference type="PDB" id="2F3S">
    <property type="method" value="X-ray"/>
    <property type="resolution" value="1.96 A"/>
    <property type="chains" value="A=2-843"/>
</dbReference>
<dbReference type="PDB" id="2F3U">
    <property type="method" value="X-ray"/>
    <property type="resolution" value="1.93 A"/>
    <property type="chains" value="A=2-843"/>
</dbReference>
<dbReference type="PDB" id="2FET">
    <property type="method" value="X-ray"/>
    <property type="resolution" value="2.03 A"/>
    <property type="chains" value="A=2-843"/>
</dbReference>
<dbReference type="PDB" id="2FF5">
    <property type="method" value="X-ray"/>
    <property type="resolution" value="2.03 A"/>
    <property type="chains" value="A=2-843"/>
</dbReference>
<dbReference type="PDB" id="2FFR">
    <property type="method" value="X-ray"/>
    <property type="resolution" value="2.03 A"/>
    <property type="chains" value="A=13-837"/>
</dbReference>
<dbReference type="PDB" id="2G9Q">
    <property type="method" value="X-ray"/>
    <property type="resolution" value="2.50 A"/>
    <property type="chains" value="A=2-843"/>
</dbReference>
<dbReference type="PDB" id="2G9R">
    <property type="method" value="X-ray"/>
    <property type="resolution" value="2.07 A"/>
    <property type="chains" value="A=2-843"/>
</dbReference>
<dbReference type="PDB" id="2G9U">
    <property type="method" value="X-ray"/>
    <property type="resolution" value="2.15 A"/>
    <property type="chains" value="A=2-843"/>
</dbReference>
<dbReference type="PDB" id="2G9V">
    <property type="method" value="X-ray"/>
    <property type="resolution" value="2.15 A"/>
    <property type="chains" value="A=2-843"/>
</dbReference>
<dbReference type="PDB" id="2GJ4">
    <property type="method" value="X-ray"/>
    <property type="resolution" value="1.60 A"/>
    <property type="chains" value="A=13-836"/>
</dbReference>
<dbReference type="PDB" id="2GM9">
    <property type="method" value="X-ray"/>
    <property type="resolution" value="2.30 A"/>
    <property type="chains" value="A=13-837"/>
</dbReference>
<dbReference type="PDB" id="2GPA">
    <property type="method" value="X-ray"/>
    <property type="resolution" value="2.00 A"/>
    <property type="chains" value="A=2-843"/>
</dbReference>
<dbReference type="PDB" id="2GPB">
    <property type="method" value="X-ray"/>
    <property type="resolution" value="2.30 A"/>
    <property type="chains" value="A=2-843"/>
</dbReference>
<dbReference type="PDB" id="2GPN">
    <property type="method" value="X-ray"/>
    <property type="resolution" value="1.99 A"/>
    <property type="chains" value="A=2-843"/>
</dbReference>
<dbReference type="PDB" id="2IEG">
    <property type="method" value="X-ray"/>
    <property type="resolution" value="1.90 A"/>
    <property type="chains" value="A/B=2-843"/>
</dbReference>
<dbReference type="PDB" id="2IEI">
    <property type="method" value="X-ray"/>
    <property type="resolution" value="1.91 A"/>
    <property type="chains" value="A/B=2-843"/>
</dbReference>
<dbReference type="PDB" id="2OFF">
    <property type="method" value="X-ray"/>
    <property type="resolution" value="2.20 A"/>
    <property type="chains" value="A=2-843"/>
</dbReference>
<dbReference type="PDB" id="2PRI">
    <property type="method" value="X-ray"/>
    <property type="resolution" value="2.30 A"/>
    <property type="chains" value="A=2-843"/>
</dbReference>
<dbReference type="PDB" id="2PRJ">
    <property type="method" value="X-ray"/>
    <property type="resolution" value="2.30 A"/>
    <property type="chains" value="A=2-843"/>
</dbReference>
<dbReference type="PDB" id="2PYD">
    <property type="method" value="X-ray"/>
    <property type="resolution" value="1.93 A"/>
    <property type="chains" value="A=1-843"/>
</dbReference>
<dbReference type="PDB" id="2PYI">
    <property type="method" value="X-ray"/>
    <property type="resolution" value="1.88 A"/>
    <property type="chains" value="A=1-843"/>
</dbReference>
<dbReference type="PDB" id="2QLM">
    <property type="method" value="X-ray"/>
    <property type="resolution" value="2.10 A"/>
    <property type="chains" value="A=2-843"/>
</dbReference>
<dbReference type="PDB" id="2QLN">
    <property type="method" value="X-ray"/>
    <property type="resolution" value="2.15 A"/>
    <property type="chains" value="A=2-843"/>
</dbReference>
<dbReference type="PDB" id="2QN1">
    <property type="method" value="X-ray"/>
    <property type="resolution" value="2.40 A"/>
    <property type="chains" value="A=2-843"/>
</dbReference>
<dbReference type="PDB" id="2QN2">
    <property type="method" value="X-ray"/>
    <property type="resolution" value="2.70 A"/>
    <property type="chains" value="A=2-843"/>
</dbReference>
<dbReference type="PDB" id="2QN3">
    <property type="method" value="X-ray"/>
    <property type="resolution" value="1.96 A"/>
    <property type="chains" value="A=2-843"/>
</dbReference>
<dbReference type="PDB" id="2QN7">
    <property type="method" value="X-ray"/>
    <property type="resolution" value="1.83 A"/>
    <property type="chains" value="A=2-843"/>
</dbReference>
<dbReference type="PDB" id="2QN8">
    <property type="method" value="X-ray"/>
    <property type="resolution" value="1.90 A"/>
    <property type="chains" value="A=2-843"/>
</dbReference>
<dbReference type="PDB" id="2QN9">
    <property type="method" value="X-ray"/>
    <property type="resolution" value="2.00 A"/>
    <property type="chains" value="A=2-843"/>
</dbReference>
<dbReference type="PDB" id="2QNB">
    <property type="method" value="X-ray"/>
    <property type="resolution" value="1.80 A"/>
    <property type="chains" value="A=2-843"/>
</dbReference>
<dbReference type="PDB" id="2QRG">
    <property type="method" value="X-ray"/>
    <property type="resolution" value="1.85 A"/>
    <property type="chains" value="A=2-843"/>
</dbReference>
<dbReference type="PDB" id="2QRH">
    <property type="method" value="X-ray"/>
    <property type="resolution" value="1.83 A"/>
    <property type="chains" value="A=2-843"/>
</dbReference>
<dbReference type="PDB" id="2QRM">
    <property type="method" value="X-ray"/>
    <property type="resolution" value="1.90 A"/>
    <property type="chains" value="A=2-843"/>
</dbReference>
<dbReference type="PDB" id="2QRP">
    <property type="method" value="X-ray"/>
    <property type="resolution" value="1.86 A"/>
    <property type="chains" value="A=2-843"/>
</dbReference>
<dbReference type="PDB" id="2QRQ">
    <property type="method" value="X-ray"/>
    <property type="resolution" value="1.80 A"/>
    <property type="chains" value="A=2-843"/>
</dbReference>
<dbReference type="PDB" id="2SKC">
    <property type="method" value="X-ray"/>
    <property type="resolution" value="2.40 A"/>
    <property type="chains" value="A=2-843"/>
</dbReference>
<dbReference type="PDB" id="2SKD">
    <property type="method" value="X-ray"/>
    <property type="resolution" value="2.40 A"/>
    <property type="chains" value="A=2-843"/>
</dbReference>
<dbReference type="PDB" id="2SKE">
    <property type="method" value="X-ray"/>
    <property type="resolution" value="2.46 A"/>
    <property type="chains" value="A=2-843"/>
</dbReference>
<dbReference type="PDB" id="3AMV">
    <property type="method" value="X-ray"/>
    <property type="resolution" value="2.10 A"/>
    <property type="chains" value="A=2-843"/>
</dbReference>
<dbReference type="PDB" id="3BCR">
    <property type="method" value="X-ray"/>
    <property type="resolution" value="2.14 A"/>
    <property type="chains" value="A=2-843"/>
</dbReference>
<dbReference type="PDB" id="3BCS">
    <property type="method" value="X-ray"/>
    <property type="resolution" value="2.00 A"/>
    <property type="chains" value="A=2-843"/>
</dbReference>
<dbReference type="PDB" id="3BCU">
    <property type="method" value="X-ray"/>
    <property type="resolution" value="2.03 A"/>
    <property type="chains" value="A=2-843"/>
</dbReference>
<dbReference type="PDB" id="3BD6">
    <property type="method" value="X-ray"/>
    <property type="resolution" value="2.00 A"/>
    <property type="chains" value="A=2-843"/>
</dbReference>
<dbReference type="PDB" id="3BD7">
    <property type="method" value="X-ray"/>
    <property type="resolution" value="1.90 A"/>
    <property type="chains" value="A=2-843"/>
</dbReference>
<dbReference type="PDB" id="3BD8">
    <property type="method" value="X-ray"/>
    <property type="resolution" value="2.10 A"/>
    <property type="chains" value="A=2-843"/>
</dbReference>
<dbReference type="PDB" id="3BDA">
    <property type="method" value="X-ray"/>
    <property type="resolution" value="2.00 A"/>
    <property type="chains" value="A=2-843"/>
</dbReference>
<dbReference type="PDB" id="3CUT">
    <property type="method" value="X-ray"/>
    <property type="resolution" value="2.30 A"/>
    <property type="chains" value="A=2-843"/>
</dbReference>
<dbReference type="PDB" id="3CUU">
    <property type="method" value="X-ray"/>
    <property type="resolution" value="2.30 A"/>
    <property type="chains" value="A=2-843"/>
</dbReference>
<dbReference type="PDB" id="3CUV">
    <property type="method" value="X-ray"/>
    <property type="resolution" value="1.93 A"/>
    <property type="chains" value="A=2-843"/>
</dbReference>
<dbReference type="PDB" id="3CUW">
    <property type="method" value="X-ray"/>
    <property type="resolution" value="2.00 A"/>
    <property type="chains" value="A=2-843"/>
</dbReference>
<dbReference type="PDB" id="3E3L">
    <property type="method" value="X-ray"/>
    <property type="resolution" value="2.59 A"/>
    <property type="chains" value="A/B/C/D=2-843"/>
</dbReference>
<dbReference type="PDB" id="3E3N">
    <property type="method" value="X-ray"/>
    <property type="resolution" value="2.70 A"/>
    <property type="chains" value="A/B/C/D/E/F/G/H=2-843"/>
</dbReference>
<dbReference type="PDB" id="3E3O">
    <property type="method" value="X-ray"/>
    <property type="resolution" value="2.60 A"/>
    <property type="chains" value="A/B/C/D=2-843"/>
</dbReference>
<dbReference type="PDB" id="3EBO">
    <property type="method" value="X-ray"/>
    <property type="resolution" value="1.90 A"/>
    <property type="chains" value="A=2-843"/>
</dbReference>
<dbReference type="PDB" id="3EBP">
    <property type="method" value="X-ray"/>
    <property type="resolution" value="2.00 A"/>
    <property type="chains" value="A=2-843"/>
</dbReference>
<dbReference type="PDB" id="3G2H">
    <property type="method" value="X-ray"/>
    <property type="resolution" value="2.03 A"/>
    <property type="chains" value="A=2-843"/>
</dbReference>
<dbReference type="PDB" id="3G2I">
    <property type="method" value="X-ray"/>
    <property type="resolution" value="2.00 A"/>
    <property type="chains" value="A=2-843"/>
</dbReference>
<dbReference type="PDB" id="3G2J">
    <property type="method" value="X-ray"/>
    <property type="resolution" value="2.14 A"/>
    <property type="chains" value="A=2-843"/>
</dbReference>
<dbReference type="PDB" id="3G2K">
    <property type="method" value="X-ray"/>
    <property type="resolution" value="2.00 A"/>
    <property type="chains" value="A=2-843"/>
</dbReference>
<dbReference type="PDB" id="3G2L">
    <property type="method" value="X-ray"/>
    <property type="resolution" value="2.30 A"/>
    <property type="chains" value="A=2-843"/>
</dbReference>
<dbReference type="PDB" id="3G2N">
    <property type="method" value="X-ray"/>
    <property type="resolution" value="2.10 A"/>
    <property type="chains" value="A=2-843"/>
</dbReference>
<dbReference type="PDB" id="3GPB">
    <property type="method" value="X-ray"/>
    <property type="resolution" value="2.30 A"/>
    <property type="chains" value="A=2-843"/>
</dbReference>
<dbReference type="PDB" id="3L79">
    <property type="method" value="X-ray"/>
    <property type="resolution" value="1.86 A"/>
    <property type="chains" value="A=1-843"/>
</dbReference>
<dbReference type="PDB" id="3L7A">
    <property type="method" value="X-ray"/>
    <property type="resolution" value="1.90 A"/>
    <property type="chains" value="A=1-843"/>
</dbReference>
<dbReference type="PDB" id="3L7B">
    <property type="method" value="X-ray"/>
    <property type="resolution" value="2.00 A"/>
    <property type="chains" value="A=1-843"/>
</dbReference>
<dbReference type="PDB" id="3L7C">
    <property type="method" value="X-ray"/>
    <property type="resolution" value="1.93 A"/>
    <property type="chains" value="A=1-843"/>
</dbReference>
<dbReference type="PDB" id="3L7D">
    <property type="method" value="X-ray"/>
    <property type="resolution" value="2.00 A"/>
    <property type="chains" value="A=1-843"/>
</dbReference>
<dbReference type="PDB" id="3MQF">
    <property type="method" value="X-ray"/>
    <property type="resolution" value="1.95 A"/>
    <property type="chains" value="A=2-843"/>
</dbReference>
<dbReference type="PDB" id="3MRT">
    <property type="method" value="X-ray"/>
    <property type="resolution" value="1.98 A"/>
    <property type="chains" value="A=2-843"/>
</dbReference>
<dbReference type="PDB" id="3MRV">
    <property type="method" value="X-ray"/>
    <property type="resolution" value="1.94 A"/>
    <property type="chains" value="A=2-843"/>
</dbReference>
<dbReference type="PDB" id="3MRX">
    <property type="method" value="X-ray"/>
    <property type="resolution" value="1.95 A"/>
    <property type="chains" value="A=2-843"/>
</dbReference>
<dbReference type="PDB" id="3MS2">
    <property type="method" value="X-ray"/>
    <property type="resolution" value="2.10 A"/>
    <property type="chains" value="A=2-843"/>
</dbReference>
<dbReference type="PDB" id="3MS4">
    <property type="method" value="X-ray"/>
    <property type="resolution" value="2.07 A"/>
    <property type="chains" value="A=2-843"/>
</dbReference>
<dbReference type="PDB" id="3MS7">
    <property type="method" value="X-ray"/>
    <property type="resolution" value="1.95 A"/>
    <property type="chains" value="A=2-843"/>
</dbReference>
<dbReference type="PDB" id="3MSC">
    <property type="method" value="X-ray"/>
    <property type="resolution" value="1.95 A"/>
    <property type="chains" value="A=2-843"/>
</dbReference>
<dbReference type="PDB" id="3MT7">
    <property type="method" value="X-ray"/>
    <property type="resolution" value="2.00 A"/>
    <property type="chains" value="A=2-843"/>
</dbReference>
<dbReference type="PDB" id="3MT8">
    <property type="method" value="X-ray"/>
    <property type="resolution" value="2.00 A"/>
    <property type="chains" value="A=2-843"/>
</dbReference>
<dbReference type="PDB" id="3MT9">
    <property type="method" value="X-ray"/>
    <property type="resolution" value="2.05 A"/>
    <property type="chains" value="A=2-843"/>
</dbReference>
<dbReference type="PDB" id="3MTA">
    <property type="method" value="X-ray"/>
    <property type="resolution" value="2.23 A"/>
    <property type="chains" value="A=2-843"/>
</dbReference>
<dbReference type="PDB" id="3MTB">
    <property type="method" value="X-ray"/>
    <property type="resolution" value="1.95 A"/>
    <property type="chains" value="A=2-843"/>
</dbReference>
<dbReference type="PDB" id="3MTD">
    <property type="method" value="X-ray"/>
    <property type="resolution" value="2.10 A"/>
    <property type="chains" value="A=2-843"/>
</dbReference>
<dbReference type="PDB" id="3NC4">
    <property type="method" value="X-ray"/>
    <property type="resolution" value="2.07 A"/>
    <property type="chains" value="A=3-843"/>
</dbReference>
<dbReference type="PDB" id="3NP7">
    <property type="method" value="X-ray"/>
    <property type="resolution" value="2.05 A"/>
    <property type="chains" value="A=2-843"/>
</dbReference>
<dbReference type="PDB" id="3NP9">
    <property type="method" value="X-ray"/>
    <property type="resolution" value="2.00 A"/>
    <property type="chains" value="A=2-843"/>
</dbReference>
<dbReference type="PDB" id="3NPA">
    <property type="method" value="X-ray"/>
    <property type="resolution" value="1.97 A"/>
    <property type="chains" value="A=2-843"/>
</dbReference>
<dbReference type="PDB" id="3S0J">
    <property type="method" value="X-ray"/>
    <property type="resolution" value="2.00 A"/>
    <property type="chains" value="A=2-843"/>
</dbReference>
<dbReference type="PDB" id="3SYM">
    <property type="method" value="X-ray"/>
    <property type="resolution" value="2.40 A"/>
    <property type="chains" value="A=2-843"/>
</dbReference>
<dbReference type="PDB" id="3SYR">
    <property type="method" value="X-ray"/>
    <property type="resolution" value="2.40 A"/>
    <property type="chains" value="A=2-843"/>
</dbReference>
<dbReference type="PDB" id="3T3D">
    <property type="method" value="X-ray"/>
    <property type="resolution" value="2.50 A"/>
    <property type="chains" value="A=2-843"/>
</dbReference>
<dbReference type="PDB" id="3T3E">
    <property type="method" value="X-ray"/>
    <property type="resolution" value="2.15 A"/>
    <property type="chains" value="A=2-843"/>
</dbReference>
<dbReference type="PDB" id="3T3G">
    <property type="method" value="X-ray"/>
    <property type="resolution" value="2.40 A"/>
    <property type="chains" value="A=2-843"/>
</dbReference>
<dbReference type="PDB" id="3T3H">
    <property type="method" value="X-ray"/>
    <property type="resolution" value="2.60 A"/>
    <property type="chains" value="A=2-843"/>
</dbReference>
<dbReference type="PDB" id="3T3I">
    <property type="method" value="X-ray"/>
    <property type="resolution" value="2.65 A"/>
    <property type="chains" value="A=2-843"/>
</dbReference>
<dbReference type="PDB" id="3ZCP">
    <property type="method" value="X-ray"/>
    <property type="resolution" value="1.83 A"/>
    <property type="chains" value="A=1-843"/>
</dbReference>
<dbReference type="PDB" id="3ZCQ">
    <property type="method" value="X-ray"/>
    <property type="resolution" value="2.15 A"/>
    <property type="chains" value="A=1-843"/>
</dbReference>
<dbReference type="PDB" id="3ZCR">
    <property type="method" value="X-ray"/>
    <property type="resolution" value="2.07 A"/>
    <property type="chains" value="A=1-843"/>
</dbReference>
<dbReference type="PDB" id="3ZCS">
    <property type="method" value="X-ray"/>
    <property type="resolution" value="2.03 A"/>
    <property type="chains" value="A=1-843"/>
</dbReference>
<dbReference type="PDB" id="3ZCT">
    <property type="method" value="X-ray"/>
    <property type="resolution" value="2.00 A"/>
    <property type="chains" value="A=1-843"/>
</dbReference>
<dbReference type="PDB" id="3ZCU">
    <property type="method" value="X-ray"/>
    <property type="resolution" value="2.05 A"/>
    <property type="chains" value="A=1-843"/>
</dbReference>
<dbReference type="PDB" id="3ZCV">
    <property type="method" value="X-ray"/>
    <property type="resolution" value="1.83 A"/>
    <property type="chains" value="A=1-843"/>
</dbReference>
<dbReference type="PDB" id="4CTM">
    <property type="method" value="X-ray"/>
    <property type="resolution" value="1.95 A"/>
    <property type="chains" value="A=1-843"/>
</dbReference>
<dbReference type="PDB" id="4CTN">
    <property type="method" value="X-ray"/>
    <property type="resolution" value="2.10 A"/>
    <property type="chains" value="A=1-843"/>
</dbReference>
<dbReference type="PDB" id="4CTO">
    <property type="method" value="X-ray"/>
    <property type="resolution" value="1.90 A"/>
    <property type="chains" value="A=1-843"/>
</dbReference>
<dbReference type="PDB" id="4EJ2">
    <property type="method" value="X-ray"/>
    <property type="resolution" value="2.65 A"/>
    <property type="chains" value="A=13-837"/>
</dbReference>
<dbReference type="PDB" id="4EKE">
    <property type="method" value="X-ray"/>
    <property type="resolution" value="2.60 A"/>
    <property type="chains" value="A=13-837"/>
</dbReference>
<dbReference type="PDB" id="4EKY">
    <property type="method" value="X-ray"/>
    <property type="resolution" value="2.45 A"/>
    <property type="chains" value="A=13-837"/>
</dbReference>
<dbReference type="PDB" id="4EL0">
    <property type="method" value="X-ray"/>
    <property type="resolution" value="2.40 A"/>
    <property type="chains" value="A=13-837"/>
</dbReference>
<dbReference type="PDB" id="4EL5">
    <property type="method" value="X-ray"/>
    <property type="resolution" value="2.00 A"/>
    <property type="chains" value="A=13-837"/>
</dbReference>
<dbReference type="PDB" id="4GPB">
    <property type="method" value="X-ray"/>
    <property type="resolution" value="2.30 A"/>
    <property type="chains" value="A=2-843"/>
</dbReference>
<dbReference type="PDB" id="4MHO">
    <property type="method" value="X-ray"/>
    <property type="resolution" value="2.00 A"/>
    <property type="chains" value="A=13-837"/>
</dbReference>
<dbReference type="PDB" id="4MHS">
    <property type="method" value="X-ray"/>
    <property type="resolution" value="2.00 A"/>
    <property type="chains" value="A=13-837"/>
</dbReference>
<dbReference type="PDB" id="4MI3">
    <property type="method" value="X-ray"/>
    <property type="resolution" value="2.15 A"/>
    <property type="chains" value="A=13-837"/>
</dbReference>
<dbReference type="PDB" id="4MI6">
    <property type="method" value="X-ray"/>
    <property type="resolution" value="1.90 A"/>
    <property type="chains" value="A=13-837"/>
</dbReference>
<dbReference type="PDB" id="4MI9">
    <property type="method" value="X-ray"/>
    <property type="resolution" value="1.85 A"/>
    <property type="chains" value="A=13-837"/>
</dbReference>
<dbReference type="PDB" id="4MIC">
    <property type="method" value="X-ray"/>
    <property type="resolution" value="2.45 A"/>
    <property type="chains" value="A=13-837"/>
</dbReference>
<dbReference type="PDB" id="4MRA">
    <property type="method" value="X-ray"/>
    <property type="resolution" value="2.34 A"/>
    <property type="chains" value="A=13-837"/>
</dbReference>
<dbReference type="PDB" id="4YI3">
    <property type="method" value="X-ray"/>
    <property type="resolution" value="1.80 A"/>
    <property type="chains" value="A=1-843"/>
</dbReference>
<dbReference type="PDB" id="4YI5">
    <property type="method" value="X-ray"/>
    <property type="resolution" value="1.80 A"/>
    <property type="chains" value="A=1-843"/>
</dbReference>
<dbReference type="PDB" id="4YUA">
    <property type="method" value="X-ray"/>
    <property type="resolution" value="2.00 A"/>
    <property type="chains" value="A=13-837"/>
</dbReference>
<dbReference type="PDB" id="4Z5X">
    <property type="method" value="X-ray"/>
    <property type="resolution" value="2.10 A"/>
    <property type="chains" value="A=1-843"/>
</dbReference>
<dbReference type="PDB" id="5GPB">
    <property type="method" value="X-ray"/>
    <property type="resolution" value="2.30 A"/>
    <property type="chains" value="A=2-843"/>
</dbReference>
<dbReference type="PDB" id="5JTT">
    <property type="method" value="X-ray"/>
    <property type="resolution" value="1.85 A"/>
    <property type="chains" value="A=1-843"/>
</dbReference>
<dbReference type="PDB" id="5JTU">
    <property type="method" value="X-ray"/>
    <property type="resolution" value="1.85 A"/>
    <property type="chains" value="A=1-843"/>
</dbReference>
<dbReference type="PDB" id="5LRC">
    <property type="method" value="X-ray"/>
    <property type="resolution" value="2.00 A"/>
    <property type="chains" value="A=2-843"/>
</dbReference>
<dbReference type="PDB" id="5LRD">
    <property type="method" value="X-ray"/>
    <property type="resolution" value="1.80 A"/>
    <property type="chains" value="A=1-843"/>
</dbReference>
<dbReference type="PDB" id="5LRE">
    <property type="method" value="X-ray"/>
    <property type="resolution" value="1.80 A"/>
    <property type="chains" value="A=2-843"/>
</dbReference>
<dbReference type="PDB" id="5LRF">
    <property type="method" value="X-ray"/>
    <property type="resolution" value="1.75 A"/>
    <property type="chains" value="A=2-843"/>
</dbReference>
<dbReference type="PDB" id="5MCB">
    <property type="method" value="X-ray"/>
    <property type="resolution" value="1.95 A"/>
    <property type="chains" value="A=13-837"/>
</dbReference>
<dbReference type="PDB" id="5MEM">
    <property type="method" value="X-ray"/>
    <property type="resolution" value="1.78 A"/>
    <property type="chains" value="A=1-843"/>
</dbReference>
<dbReference type="PDB" id="5O50">
    <property type="method" value="X-ray"/>
    <property type="resolution" value="1.90 A"/>
    <property type="chains" value="A=2-843"/>
</dbReference>
<dbReference type="PDB" id="5O52">
    <property type="method" value="X-ray"/>
    <property type="resolution" value="1.90 A"/>
    <property type="chains" value="A=1-843"/>
</dbReference>
<dbReference type="PDB" id="5O54">
    <property type="method" value="X-ray"/>
    <property type="resolution" value="2.45 A"/>
    <property type="chains" value="A=1-843"/>
</dbReference>
<dbReference type="PDB" id="5O56">
    <property type="method" value="X-ray"/>
    <property type="resolution" value="2.45 A"/>
    <property type="chains" value="A=1-843"/>
</dbReference>
<dbReference type="PDB" id="5OWY">
    <property type="method" value="X-ray"/>
    <property type="resolution" value="1.90 A"/>
    <property type="chains" value="A=1-843"/>
</dbReference>
<dbReference type="PDB" id="5OWZ">
    <property type="method" value="X-ray"/>
    <property type="resolution" value="1.85 A"/>
    <property type="chains" value="A=1-843"/>
</dbReference>
<dbReference type="PDB" id="5OX0">
    <property type="method" value="X-ray"/>
    <property type="resolution" value="1.90 A"/>
    <property type="chains" value="A=1-843"/>
</dbReference>
<dbReference type="PDB" id="5OX1">
    <property type="method" value="X-ray"/>
    <property type="resolution" value="1.85 A"/>
    <property type="chains" value="A=1-843"/>
</dbReference>
<dbReference type="PDB" id="5OX3">
    <property type="method" value="X-ray"/>
    <property type="resolution" value="1.90 A"/>
    <property type="chains" value="A=1-843"/>
</dbReference>
<dbReference type="PDB" id="5OX4">
    <property type="method" value="X-ray"/>
    <property type="resolution" value="1.80 A"/>
    <property type="chains" value="A=1-843"/>
</dbReference>
<dbReference type="PDB" id="6F3J">
    <property type="method" value="X-ray"/>
    <property type="resolution" value="2.20 A"/>
    <property type="chains" value="A=1-843"/>
</dbReference>
<dbReference type="PDB" id="6F3L">
    <property type="method" value="X-ray"/>
    <property type="resolution" value="1.90 A"/>
    <property type="chains" value="A=1-843"/>
</dbReference>
<dbReference type="PDB" id="6F3R">
    <property type="method" value="X-ray"/>
    <property type="resolution" value="1.90 A"/>
    <property type="chains" value="A=1-843"/>
</dbReference>
<dbReference type="PDB" id="6F3S">
    <property type="method" value="X-ray"/>
    <property type="resolution" value="1.90 A"/>
    <property type="chains" value="A=1-843"/>
</dbReference>
<dbReference type="PDB" id="6F3U">
    <property type="method" value="X-ray"/>
    <property type="resolution" value="2.20 A"/>
    <property type="chains" value="A=1-843"/>
</dbReference>
<dbReference type="PDB" id="6GPB">
    <property type="method" value="X-ray"/>
    <property type="resolution" value="2.86 A"/>
    <property type="chains" value="A=2-843"/>
</dbReference>
<dbReference type="PDB" id="6QA6">
    <property type="method" value="X-ray"/>
    <property type="resolution" value="2.40 A"/>
    <property type="chains" value="A=1-843"/>
</dbReference>
<dbReference type="PDB" id="6QA7">
    <property type="method" value="X-ray"/>
    <property type="resolution" value="2.36 A"/>
    <property type="chains" value="A=1-843"/>
</dbReference>
<dbReference type="PDB" id="6QA8">
    <property type="method" value="X-ray"/>
    <property type="resolution" value="2.35 A"/>
    <property type="chains" value="A=1-843"/>
</dbReference>
<dbReference type="PDB" id="6R0H">
    <property type="method" value="X-ray"/>
    <property type="resolution" value="2.50 A"/>
    <property type="chains" value="A=1-843"/>
</dbReference>
<dbReference type="PDB" id="6R0I">
    <property type="method" value="X-ray"/>
    <property type="resolution" value="2.40 A"/>
    <property type="chains" value="A=1-843"/>
</dbReference>
<dbReference type="PDB" id="6S4H">
    <property type="method" value="X-ray"/>
    <property type="resolution" value="2.45 A"/>
    <property type="chains" value="A=1-843"/>
</dbReference>
<dbReference type="PDB" id="6S4K">
    <property type="method" value="X-ray"/>
    <property type="resolution" value="2.43 A"/>
    <property type="chains" value="A=1-843"/>
</dbReference>
<dbReference type="PDB" id="6S4O">
    <property type="method" value="X-ray"/>
    <property type="resolution" value="2.35 A"/>
    <property type="chains" value="A=1-843"/>
</dbReference>
<dbReference type="PDB" id="6S4P">
    <property type="method" value="X-ray"/>
    <property type="resolution" value="2.37 A"/>
    <property type="chains" value="A=1-843"/>
</dbReference>
<dbReference type="PDB" id="6S4R">
    <property type="method" value="X-ray"/>
    <property type="resolution" value="2.30 A"/>
    <property type="chains" value="A=1-843"/>
</dbReference>
<dbReference type="PDB" id="6S51">
    <property type="method" value="X-ray"/>
    <property type="resolution" value="2.37 A"/>
    <property type="chains" value="A=1-843"/>
</dbReference>
<dbReference type="PDB" id="6S52">
    <property type="method" value="X-ray"/>
    <property type="resolution" value="2.37 A"/>
    <property type="chains" value="A=1-843"/>
</dbReference>
<dbReference type="PDB" id="6Y55">
    <property type="method" value="X-ray"/>
    <property type="resolution" value="2.38 A"/>
    <property type="chains" value="A=1-843"/>
</dbReference>
<dbReference type="PDB" id="6Y5C">
    <property type="method" value="X-ray"/>
    <property type="resolution" value="2.40 A"/>
    <property type="chains" value="A=2-843"/>
</dbReference>
<dbReference type="PDB" id="6Y5O">
    <property type="method" value="X-ray"/>
    <property type="resolution" value="2.33 A"/>
    <property type="chains" value="A=2-843"/>
</dbReference>
<dbReference type="PDB" id="6YVE">
    <property type="method" value="X-ray"/>
    <property type="resolution" value="2.10 A"/>
    <property type="chains" value="AAA=1-843"/>
</dbReference>
<dbReference type="PDB" id="7GPB">
    <property type="method" value="X-ray"/>
    <property type="resolution" value="2.90 A"/>
    <property type="chains" value="A/B/C/D=2-843"/>
</dbReference>
<dbReference type="PDB" id="7ONF">
    <property type="method" value="X-ray"/>
    <property type="resolution" value="1.60 A"/>
    <property type="chains" value="A=13-837"/>
</dbReference>
<dbReference type="PDB" id="7P7D">
    <property type="method" value="X-ray"/>
    <property type="resolution" value="1.45 A"/>
    <property type="chains" value="A=8-837"/>
</dbReference>
<dbReference type="PDB" id="7Q5I">
    <property type="method" value="X-ray"/>
    <property type="resolution" value="1.80 A"/>
    <property type="chains" value="AAA=1-843"/>
</dbReference>
<dbReference type="PDB" id="8BZS">
    <property type="method" value="X-ray"/>
    <property type="resolution" value="2.25 A"/>
    <property type="chains" value="A=1-843"/>
</dbReference>
<dbReference type="PDB" id="8GPB">
    <property type="method" value="X-ray"/>
    <property type="resolution" value="2.20 A"/>
    <property type="chains" value="A=2-843"/>
</dbReference>
<dbReference type="PDB" id="8QMU">
    <property type="method" value="X-ray"/>
    <property type="resolution" value="2.00 A"/>
    <property type="chains" value="A=8-837"/>
</dbReference>
<dbReference type="PDB" id="8R52">
    <property type="method" value="X-ray"/>
    <property type="resolution" value="2.10 A"/>
    <property type="chains" value="A=8-836"/>
</dbReference>
<dbReference type="PDB" id="8R53">
    <property type="method" value="X-ray"/>
    <property type="resolution" value="2.00 A"/>
    <property type="chains" value="A=8-837"/>
</dbReference>
<dbReference type="PDB" id="8R6V">
    <property type="method" value="X-ray"/>
    <property type="resolution" value="2.50 A"/>
    <property type="chains" value="A=8-837"/>
</dbReference>
<dbReference type="PDB" id="9GPB">
    <property type="method" value="X-ray"/>
    <property type="resolution" value="2.90 A"/>
    <property type="chains" value="A/B/C/D=2-843"/>
</dbReference>
<dbReference type="PDBsum" id="1A8I"/>
<dbReference type="PDBsum" id="1ABB"/>
<dbReference type="PDBsum" id="1AXR"/>
<dbReference type="PDBsum" id="1B4D"/>
<dbReference type="PDBsum" id="1BX3"/>
<dbReference type="PDBsum" id="1C50"/>
<dbReference type="PDBsum" id="1C8K"/>
<dbReference type="PDBsum" id="1C8L"/>
<dbReference type="PDBsum" id="1E1Y"/>
<dbReference type="PDBsum" id="1FS4"/>
<dbReference type="PDBsum" id="1FTQ"/>
<dbReference type="PDBsum" id="1FTW"/>
<dbReference type="PDBsum" id="1FTY"/>
<dbReference type="PDBsum" id="1FU4"/>
<dbReference type="PDBsum" id="1FU7"/>
<dbReference type="PDBsum" id="1FU8"/>
<dbReference type="PDBsum" id="1GFZ"/>
<dbReference type="PDBsum" id="1GG8"/>
<dbReference type="PDBsum" id="1GGN"/>
<dbReference type="PDBsum" id="1GPA"/>
<dbReference type="PDBsum" id="1GPB"/>
<dbReference type="PDBsum" id="1GPY"/>
<dbReference type="PDBsum" id="1H5U"/>
<dbReference type="PDBsum" id="1HLF"/>
<dbReference type="PDBsum" id="1K06"/>
<dbReference type="PDBsum" id="1K08"/>
<dbReference type="PDBsum" id="1KTI"/>
<dbReference type="PDBsum" id="1LWN"/>
<dbReference type="PDBsum" id="1LWO"/>
<dbReference type="PDBsum" id="1NOI"/>
<dbReference type="PDBsum" id="1NOJ"/>
<dbReference type="PDBsum" id="1NOK"/>
<dbReference type="PDBsum" id="1P29"/>
<dbReference type="PDBsum" id="1P2B"/>
<dbReference type="PDBsum" id="1P2D"/>
<dbReference type="PDBsum" id="1P2G"/>
<dbReference type="PDBsum" id="1P4G"/>
<dbReference type="PDBsum" id="1P4H"/>
<dbReference type="PDBsum" id="1P4J"/>
<dbReference type="PDBsum" id="1PYG"/>
<dbReference type="PDBsum" id="1UZU"/>
<dbReference type="PDBsum" id="1WUT"/>
<dbReference type="PDBsum" id="1WUY"/>
<dbReference type="PDBsum" id="1WV0"/>
<dbReference type="PDBsum" id="1WV1"/>
<dbReference type="PDBsum" id="1WW2"/>
<dbReference type="PDBsum" id="1WW3"/>
<dbReference type="PDBsum" id="1XC7"/>
<dbReference type="PDBsum" id="1XKX"/>
<dbReference type="PDBsum" id="1XL0"/>
<dbReference type="PDBsum" id="1XL1"/>
<dbReference type="PDBsum" id="1Z62"/>
<dbReference type="PDBsum" id="1Z6P"/>
<dbReference type="PDBsum" id="1Z6Q"/>
<dbReference type="PDBsum" id="2AMV"/>
<dbReference type="PDBsum" id="2F3P"/>
<dbReference type="PDBsum" id="2F3Q"/>
<dbReference type="PDBsum" id="2F3S"/>
<dbReference type="PDBsum" id="2F3U"/>
<dbReference type="PDBsum" id="2FET"/>
<dbReference type="PDBsum" id="2FF5"/>
<dbReference type="PDBsum" id="2FFR"/>
<dbReference type="PDBsum" id="2G9Q"/>
<dbReference type="PDBsum" id="2G9R"/>
<dbReference type="PDBsum" id="2G9U"/>
<dbReference type="PDBsum" id="2G9V"/>
<dbReference type="PDBsum" id="2GJ4"/>
<dbReference type="PDBsum" id="2GM9"/>
<dbReference type="PDBsum" id="2GPA"/>
<dbReference type="PDBsum" id="2GPB"/>
<dbReference type="PDBsum" id="2GPN"/>
<dbReference type="PDBsum" id="2IEG"/>
<dbReference type="PDBsum" id="2IEI"/>
<dbReference type="PDBsum" id="2OFF"/>
<dbReference type="PDBsum" id="2PRI"/>
<dbReference type="PDBsum" id="2PRJ"/>
<dbReference type="PDBsum" id="2PYD"/>
<dbReference type="PDBsum" id="2PYI"/>
<dbReference type="PDBsum" id="2QLM"/>
<dbReference type="PDBsum" id="2QLN"/>
<dbReference type="PDBsum" id="2QN1"/>
<dbReference type="PDBsum" id="2QN2"/>
<dbReference type="PDBsum" id="2QN3"/>
<dbReference type="PDBsum" id="2QN7"/>
<dbReference type="PDBsum" id="2QN8"/>
<dbReference type="PDBsum" id="2QN9"/>
<dbReference type="PDBsum" id="2QNB"/>
<dbReference type="PDBsum" id="2QRG"/>
<dbReference type="PDBsum" id="2QRH"/>
<dbReference type="PDBsum" id="2QRM"/>
<dbReference type="PDBsum" id="2QRP"/>
<dbReference type="PDBsum" id="2QRQ"/>
<dbReference type="PDBsum" id="2SKC"/>
<dbReference type="PDBsum" id="2SKD"/>
<dbReference type="PDBsum" id="2SKE"/>
<dbReference type="PDBsum" id="3AMV"/>
<dbReference type="PDBsum" id="3BCR"/>
<dbReference type="PDBsum" id="3BCS"/>
<dbReference type="PDBsum" id="3BCU"/>
<dbReference type="PDBsum" id="3BD6"/>
<dbReference type="PDBsum" id="3BD7"/>
<dbReference type="PDBsum" id="3BD8"/>
<dbReference type="PDBsum" id="3BDA"/>
<dbReference type="PDBsum" id="3CUT"/>
<dbReference type="PDBsum" id="3CUU"/>
<dbReference type="PDBsum" id="3CUV"/>
<dbReference type="PDBsum" id="3CUW"/>
<dbReference type="PDBsum" id="3E3L"/>
<dbReference type="PDBsum" id="3E3N"/>
<dbReference type="PDBsum" id="3E3O"/>
<dbReference type="PDBsum" id="3EBO"/>
<dbReference type="PDBsum" id="3EBP"/>
<dbReference type="PDBsum" id="3G2H"/>
<dbReference type="PDBsum" id="3G2I"/>
<dbReference type="PDBsum" id="3G2J"/>
<dbReference type="PDBsum" id="3G2K"/>
<dbReference type="PDBsum" id="3G2L"/>
<dbReference type="PDBsum" id="3G2N"/>
<dbReference type="PDBsum" id="3GPB"/>
<dbReference type="PDBsum" id="3L79"/>
<dbReference type="PDBsum" id="3L7A"/>
<dbReference type="PDBsum" id="3L7B"/>
<dbReference type="PDBsum" id="3L7C"/>
<dbReference type="PDBsum" id="3L7D"/>
<dbReference type="PDBsum" id="3MQF"/>
<dbReference type="PDBsum" id="3MRT"/>
<dbReference type="PDBsum" id="3MRV"/>
<dbReference type="PDBsum" id="3MRX"/>
<dbReference type="PDBsum" id="3MS2"/>
<dbReference type="PDBsum" id="3MS4"/>
<dbReference type="PDBsum" id="3MS7"/>
<dbReference type="PDBsum" id="3MSC"/>
<dbReference type="PDBsum" id="3MT7"/>
<dbReference type="PDBsum" id="3MT8"/>
<dbReference type="PDBsum" id="3MT9"/>
<dbReference type="PDBsum" id="3MTA"/>
<dbReference type="PDBsum" id="3MTB"/>
<dbReference type="PDBsum" id="3MTD"/>
<dbReference type="PDBsum" id="3NC4"/>
<dbReference type="PDBsum" id="3NP7"/>
<dbReference type="PDBsum" id="3NP9"/>
<dbReference type="PDBsum" id="3NPA"/>
<dbReference type="PDBsum" id="3S0J"/>
<dbReference type="PDBsum" id="3SYM"/>
<dbReference type="PDBsum" id="3SYR"/>
<dbReference type="PDBsum" id="3T3D"/>
<dbReference type="PDBsum" id="3T3E"/>
<dbReference type="PDBsum" id="3T3G"/>
<dbReference type="PDBsum" id="3T3H"/>
<dbReference type="PDBsum" id="3T3I"/>
<dbReference type="PDBsum" id="3ZCP"/>
<dbReference type="PDBsum" id="3ZCQ"/>
<dbReference type="PDBsum" id="3ZCR"/>
<dbReference type="PDBsum" id="3ZCS"/>
<dbReference type="PDBsum" id="3ZCT"/>
<dbReference type="PDBsum" id="3ZCU"/>
<dbReference type="PDBsum" id="3ZCV"/>
<dbReference type="PDBsum" id="4CTM"/>
<dbReference type="PDBsum" id="4CTN"/>
<dbReference type="PDBsum" id="4CTO"/>
<dbReference type="PDBsum" id="4EJ2"/>
<dbReference type="PDBsum" id="4EKE"/>
<dbReference type="PDBsum" id="4EKY"/>
<dbReference type="PDBsum" id="4EL0"/>
<dbReference type="PDBsum" id="4EL5"/>
<dbReference type="PDBsum" id="4GPB"/>
<dbReference type="PDBsum" id="4MHO"/>
<dbReference type="PDBsum" id="4MHS"/>
<dbReference type="PDBsum" id="4MI3"/>
<dbReference type="PDBsum" id="4MI6"/>
<dbReference type="PDBsum" id="4MI9"/>
<dbReference type="PDBsum" id="4MIC"/>
<dbReference type="PDBsum" id="4MRA"/>
<dbReference type="PDBsum" id="4YI3"/>
<dbReference type="PDBsum" id="4YI5"/>
<dbReference type="PDBsum" id="4YUA"/>
<dbReference type="PDBsum" id="4Z5X"/>
<dbReference type="PDBsum" id="5GPB"/>
<dbReference type="PDBsum" id="5JTT"/>
<dbReference type="PDBsum" id="5JTU"/>
<dbReference type="PDBsum" id="5LRC"/>
<dbReference type="PDBsum" id="5LRD"/>
<dbReference type="PDBsum" id="5LRE"/>
<dbReference type="PDBsum" id="5LRF"/>
<dbReference type="PDBsum" id="5MCB"/>
<dbReference type="PDBsum" id="5MEM"/>
<dbReference type="PDBsum" id="5O50"/>
<dbReference type="PDBsum" id="5O52"/>
<dbReference type="PDBsum" id="5O54"/>
<dbReference type="PDBsum" id="5O56"/>
<dbReference type="PDBsum" id="5OWY"/>
<dbReference type="PDBsum" id="5OWZ"/>
<dbReference type="PDBsum" id="5OX0"/>
<dbReference type="PDBsum" id="5OX1"/>
<dbReference type="PDBsum" id="5OX3"/>
<dbReference type="PDBsum" id="5OX4"/>
<dbReference type="PDBsum" id="6F3J"/>
<dbReference type="PDBsum" id="6F3L"/>
<dbReference type="PDBsum" id="6F3R"/>
<dbReference type="PDBsum" id="6F3S"/>
<dbReference type="PDBsum" id="6F3U"/>
<dbReference type="PDBsum" id="6GPB"/>
<dbReference type="PDBsum" id="6QA6"/>
<dbReference type="PDBsum" id="6QA7"/>
<dbReference type="PDBsum" id="6QA8"/>
<dbReference type="PDBsum" id="6R0H"/>
<dbReference type="PDBsum" id="6R0I"/>
<dbReference type="PDBsum" id="6S4H"/>
<dbReference type="PDBsum" id="6S4K"/>
<dbReference type="PDBsum" id="6S4O"/>
<dbReference type="PDBsum" id="6S4P"/>
<dbReference type="PDBsum" id="6S4R"/>
<dbReference type="PDBsum" id="6S51"/>
<dbReference type="PDBsum" id="6S52"/>
<dbReference type="PDBsum" id="6Y55"/>
<dbReference type="PDBsum" id="6Y5C"/>
<dbReference type="PDBsum" id="6Y5O"/>
<dbReference type="PDBsum" id="6YVE"/>
<dbReference type="PDBsum" id="7GPB"/>
<dbReference type="PDBsum" id="7ONF"/>
<dbReference type="PDBsum" id="7P7D"/>
<dbReference type="PDBsum" id="7Q5I"/>
<dbReference type="PDBsum" id="8BZS"/>
<dbReference type="PDBsum" id="8GPB"/>
<dbReference type="PDBsum" id="8QMU"/>
<dbReference type="PDBsum" id="8R52"/>
<dbReference type="PDBsum" id="8R53"/>
<dbReference type="PDBsum" id="8R6V"/>
<dbReference type="PDBsum" id="9GPB"/>
<dbReference type="PCDDB" id="P00489"/>
<dbReference type="SMR" id="P00489"/>
<dbReference type="BioGRID" id="1171995">
    <property type="interactions" value="1"/>
</dbReference>
<dbReference type="DIP" id="DIP-38240N"/>
<dbReference type="ELM" id="P00489"/>
<dbReference type="FunCoup" id="P00489">
    <property type="interactions" value="285"/>
</dbReference>
<dbReference type="IntAct" id="P00489">
    <property type="interactions" value="5"/>
</dbReference>
<dbReference type="MINT" id="P00489"/>
<dbReference type="STRING" id="9986.ENSOCUP00000001880"/>
<dbReference type="BindingDB" id="P00489"/>
<dbReference type="ChEMBL" id="CHEMBL4696"/>
<dbReference type="DrugCentral" id="P00489"/>
<dbReference type="CAZy" id="GT35">
    <property type="family name" value="Glycosyltransferase Family 35"/>
</dbReference>
<dbReference type="iPTMnet" id="P00489"/>
<dbReference type="PaxDb" id="9986-ENSOCUP00000001880"/>
<dbReference type="GeneID" id="100008972"/>
<dbReference type="KEGG" id="ocu:100008972"/>
<dbReference type="CTD" id="5837"/>
<dbReference type="eggNOG" id="KOG2099">
    <property type="taxonomic scope" value="Eukaryota"/>
</dbReference>
<dbReference type="InParanoid" id="P00489"/>
<dbReference type="OrthoDB" id="9215500at2759"/>
<dbReference type="BRENDA" id="2.4.1.1">
    <property type="organism ID" value="1749"/>
</dbReference>
<dbReference type="SABIO-RK" id="P00489"/>
<dbReference type="EvolutionaryTrace" id="P00489"/>
<dbReference type="PRO" id="PR:P00489"/>
<dbReference type="Proteomes" id="UP000001811">
    <property type="component" value="Unplaced"/>
</dbReference>
<dbReference type="GO" id="GO:0098723">
    <property type="term" value="C:skeletal muscle myofibril"/>
    <property type="evidence" value="ECO:0000314"/>
    <property type="project" value="CAFA"/>
</dbReference>
<dbReference type="GO" id="GO:0008184">
    <property type="term" value="F:glycogen phosphorylase activity"/>
    <property type="evidence" value="ECO:0000250"/>
    <property type="project" value="UniProtKB"/>
</dbReference>
<dbReference type="GO" id="GO:0000166">
    <property type="term" value="F:nucleotide binding"/>
    <property type="evidence" value="ECO:0007669"/>
    <property type="project" value="UniProtKB-KW"/>
</dbReference>
<dbReference type="GO" id="GO:0030170">
    <property type="term" value="F:pyridoxal phosphate binding"/>
    <property type="evidence" value="ECO:0007669"/>
    <property type="project" value="InterPro"/>
</dbReference>
<dbReference type="GO" id="GO:0005980">
    <property type="term" value="P:glycogen catabolic process"/>
    <property type="evidence" value="ECO:0000250"/>
    <property type="project" value="UniProtKB"/>
</dbReference>
<dbReference type="CDD" id="cd04300">
    <property type="entry name" value="GT35_Glycogen_Phosphorylase"/>
    <property type="match status" value="1"/>
</dbReference>
<dbReference type="FunFam" id="3.40.50.2000:FF:000005">
    <property type="entry name" value="Alpha-1,4 glucan phosphorylase"/>
    <property type="match status" value="1"/>
</dbReference>
<dbReference type="FunFam" id="3.40.50.2000:FF:000153">
    <property type="entry name" value="Alpha-1,4 glucan phosphorylase"/>
    <property type="match status" value="1"/>
</dbReference>
<dbReference type="FunFam" id="3.40.50.2000:FF:000197">
    <property type="entry name" value="Alpha-1,4 glucan phosphorylase"/>
    <property type="match status" value="1"/>
</dbReference>
<dbReference type="Gene3D" id="3.40.50.2000">
    <property type="entry name" value="Glycogen Phosphorylase B"/>
    <property type="match status" value="2"/>
</dbReference>
<dbReference type="InterPro" id="IPR011833">
    <property type="entry name" value="Glycg_phsphrylas"/>
</dbReference>
<dbReference type="InterPro" id="IPR000811">
    <property type="entry name" value="Glyco_trans_35"/>
</dbReference>
<dbReference type="InterPro" id="IPR035090">
    <property type="entry name" value="Pyridoxal_P_attach_site"/>
</dbReference>
<dbReference type="NCBIfam" id="TIGR02093">
    <property type="entry name" value="P_ylase"/>
    <property type="match status" value="1"/>
</dbReference>
<dbReference type="PANTHER" id="PTHR11468">
    <property type="entry name" value="GLYCOGEN PHOSPHORYLASE"/>
    <property type="match status" value="1"/>
</dbReference>
<dbReference type="PANTHER" id="PTHR11468:SF32">
    <property type="entry name" value="GLYCOGEN PHOSPHORYLASE, MUSCLE FORM"/>
    <property type="match status" value="1"/>
</dbReference>
<dbReference type="Pfam" id="PF00343">
    <property type="entry name" value="Phosphorylase"/>
    <property type="match status" value="1"/>
</dbReference>
<dbReference type="PIRSF" id="PIRSF000460">
    <property type="entry name" value="Pprylas_GlgP"/>
    <property type="match status" value="1"/>
</dbReference>
<dbReference type="SUPFAM" id="SSF53756">
    <property type="entry name" value="UDP-Glycosyltransferase/glycogen phosphorylase"/>
    <property type="match status" value="1"/>
</dbReference>
<dbReference type="PROSITE" id="PS00102">
    <property type="entry name" value="PHOSPHORYLASE"/>
    <property type="match status" value="1"/>
</dbReference>
<accession>P00489</accession>
<proteinExistence type="evidence at protein level"/>
<gene>
    <name evidence="2" type="primary">PYGM</name>
</gene>
<comment type="function">
    <text evidence="2">Allosteric enzyme that catalyzes the rate-limiting step in glycogen catabolism, the phosphorolytic cleavage of glycogen to produce glucose-1-phosphate, and plays a central role in maintaining cellular and organismal glucose homeostasis.</text>
</comment>
<comment type="catalytic activity">
    <reaction evidence="2">
        <text>[(1-&gt;4)-alpha-D-glucosyl](n) + phosphate = [(1-&gt;4)-alpha-D-glucosyl](n-1) + alpha-D-glucose 1-phosphate</text>
        <dbReference type="Rhea" id="RHEA:41732"/>
        <dbReference type="Rhea" id="RHEA-COMP:9584"/>
        <dbReference type="Rhea" id="RHEA-COMP:9586"/>
        <dbReference type="ChEBI" id="CHEBI:15444"/>
        <dbReference type="ChEBI" id="CHEBI:43474"/>
        <dbReference type="ChEBI" id="CHEBI:58601"/>
        <dbReference type="EC" id="2.4.1.1"/>
    </reaction>
    <physiologicalReaction direction="left-to-right" evidence="2">
        <dbReference type="Rhea" id="RHEA:41733"/>
    </physiologicalReaction>
</comment>
<comment type="cofactor">
    <cofactor evidence="7 8 14 15 16 17">
        <name>pyridoxal 5'-phosphate</name>
        <dbReference type="ChEBI" id="CHEBI:597326"/>
    </cofactor>
</comment>
<comment type="activity regulation">
    <text evidence="2">Allosterically regulated through the non-covalent binding of metabolites, being activated by AMP and inhibited by ATP, ADP, and glucose-6-phosphate. The activity is also controlled by post-translational modifications including phosphorylation.</text>
</comment>
<comment type="subunit">
    <text evidence="2">Homodimer. Homotetramer; to form the enzymatically active phosphorylase A.</text>
</comment>
<comment type="PTM">
    <text evidence="2">Phosphorylation of Ser-15 converts phosphorylase B (unphosphorylated) to phosphorylase A.</text>
</comment>
<comment type="similarity">
    <text evidence="10">Belongs to the glycogen phosphorylase family.</text>
</comment>
<evidence type="ECO:0000250" key="1">
    <source>
        <dbReference type="UniProtKB" id="P09812"/>
    </source>
</evidence>
<evidence type="ECO:0000250" key="2">
    <source>
        <dbReference type="UniProtKB" id="P11217"/>
    </source>
</evidence>
<evidence type="ECO:0000250" key="3">
    <source>
        <dbReference type="UniProtKB" id="Q9WUB3"/>
    </source>
</evidence>
<evidence type="ECO:0000269" key="4">
    <source>
    </source>
</evidence>
<evidence type="ECO:0000269" key="5">
    <source>
    </source>
</evidence>
<evidence type="ECO:0000269" key="6">
    <source>
    </source>
</evidence>
<evidence type="ECO:0000269" key="7">
    <source>
    </source>
</evidence>
<evidence type="ECO:0000269" key="8">
    <source>
    </source>
</evidence>
<evidence type="ECO:0000303" key="9">
    <source>
    </source>
</evidence>
<evidence type="ECO:0000305" key="10"/>
<evidence type="ECO:0000305" key="11">
    <source>
    </source>
</evidence>
<evidence type="ECO:0007744" key="12">
    <source>
        <dbReference type="PDB" id="1A8I"/>
    </source>
</evidence>
<evidence type="ECO:0007744" key="13">
    <source>
        <dbReference type="PDB" id="2GPN"/>
    </source>
</evidence>
<evidence type="ECO:0007744" key="14">
    <source>
        <dbReference type="PDB" id="2PRI"/>
    </source>
</evidence>
<evidence type="ECO:0007744" key="15">
    <source>
        <dbReference type="PDB" id="2SKC"/>
    </source>
</evidence>
<evidence type="ECO:0007744" key="16">
    <source>
        <dbReference type="PDB" id="2SKD"/>
    </source>
</evidence>
<evidence type="ECO:0007744" key="17">
    <source>
        <dbReference type="PDB" id="2SKE"/>
    </source>
</evidence>
<evidence type="ECO:0007829" key="18">
    <source>
        <dbReference type="PDB" id="1C8K"/>
    </source>
</evidence>
<evidence type="ECO:0007829" key="19">
    <source>
        <dbReference type="PDB" id="1GPA"/>
    </source>
</evidence>
<evidence type="ECO:0007829" key="20">
    <source>
        <dbReference type="PDB" id="1GPB"/>
    </source>
</evidence>
<evidence type="ECO:0007829" key="21">
    <source>
        <dbReference type="PDB" id="1Z6P"/>
    </source>
</evidence>
<evidence type="ECO:0007829" key="22">
    <source>
        <dbReference type="PDB" id="2QNB"/>
    </source>
</evidence>
<evidence type="ECO:0007829" key="23">
    <source>
        <dbReference type="PDB" id="2QRQ"/>
    </source>
</evidence>
<evidence type="ECO:0007829" key="24">
    <source>
        <dbReference type="PDB" id="3E3L"/>
    </source>
</evidence>
<evidence type="ECO:0007829" key="25">
    <source>
        <dbReference type="PDB" id="7ONF"/>
    </source>
</evidence>
<evidence type="ECO:0007829" key="26">
    <source>
        <dbReference type="PDB" id="7P7D"/>
    </source>
</evidence>
<feature type="initiator methionine" description="Removed" evidence="6">
    <location>
        <position position="1"/>
    </location>
</feature>
<feature type="chain" id="PRO_0000188532" description="Glycogen phosphorylase, muscle form">
    <location>
        <begin position="2"/>
        <end position="843"/>
    </location>
</feature>
<feature type="binding site" evidence="2">
    <location>
        <position position="43"/>
    </location>
    <ligand>
        <name>AMP</name>
        <dbReference type="ChEBI" id="CHEBI:456215"/>
    </ligand>
</feature>
<feature type="binding site" evidence="5">
    <location>
        <position position="76"/>
    </location>
    <ligand>
        <name>AMP</name>
        <dbReference type="ChEBI" id="CHEBI:456215"/>
    </ligand>
</feature>
<feature type="binding site" evidence="2">
    <location>
        <begin position="310"/>
        <end position="319"/>
    </location>
    <ligand>
        <name>AMP</name>
        <dbReference type="ChEBI" id="CHEBI:456215"/>
    </ligand>
</feature>
<feature type="site" description="Involved in the association of subunits" evidence="9">
    <location>
        <position position="109"/>
    </location>
</feature>
<feature type="site" description="Involved in the association of subunits" evidence="9">
    <location>
        <position position="143"/>
    </location>
</feature>
<feature type="site" description="Can be labeled by an AMP analog; may be involved in allosteric regulation" evidence="9">
    <location>
        <position position="156"/>
    </location>
</feature>
<feature type="modified residue" description="N-acetylserine" evidence="4">
    <location>
        <position position="2"/>
    </location>
</feature>
<feature type="modified residue" description="Phosphoserine; by PHK; in form phosphorylase A" evidence="2">
    <location>
        <position position="15"/>
    </location>
</feature>
<feature type="modified residue" description="Phosphotyrosine" evidence="1">
    <location>
        <position position="204"/>
    </location>
</feature>
<feature type="modified residue" description="Phosphotyrosine" evidence="1">
    <location>
        <position position="227"/>
    </location>
</feature>
<feature type="modified residue" description="Phosphoserine" evidence="3">
    <location>
        <position position="430"/>
    </location>
</feature>
<feature type="modified residue" description="Phosphotyrosine" evidence="3">
    <location>
        <position position="473"/>
    </location>
</feature>
<feature type="modified residue" description="Phosphoserine" evidence="1">
    <location>
        <position position="514"/>
    </location>
</feature>
<feature type="modified residue" description="N6-(pyridoxal phosphate)lysine" evidence="7 8 14 15 16 17">
    <location>
        <position position="681"/>
    </location>
</feature>
<feature type="modified residue" description="Phosphoserine" evidence="1">
    <location>
        <position position="747"/>
    </location>
</feature>
<feature type="modified residue" description="Phosphoserine" evidence="1">
    <location>
        <position position="748"/>
    </location>
</feature>
<feature type="sequence conflict" description="In Ref. 2; AA sequence." evidence="10" ref="2">
    <original>NFN</original>
    <variation>DFD</variation>
    <location>
        <begin position="31"/>
        <end position="33"/>
    </location>
</feature>
<feature type="sequence conflict" description="In Ref. 2; AA sequence." evidence="10" ref="2">
    <original>D</original>
    <variation>N</variation>
    <location>
        <position position="43"/>
    </location>
</feature>
<feature type="sequence conflict" description="In Ref. 2; AA sequence." evidence="10" ref="2">
    <original>LAH</original>
    <variation>HAL</variation>
    <location>
        <begin position="56"/>
        <end position="58"/>
    </location>
</feature>
<feature type="sequence conflict" description="In Ref. 2; AA sequence." evidence="10" ref="2">
    <original>E</original>
    <variation>Q</variation>
    <location>
        <position position="89"/>
    </location>
</feature>
<feature type="sequence conflict" description="In Ref. 2; AA sequence." evidence="10" ref="2">
    <original>T</original>
    <variation>D</variation>
    <location>
        <position position="113"/>
    </location>
</feature>
<feature type="sequence conflict" description="In Ref. 2; AA sequence." evidence="10" ref="2">
    <location>
        <position position="309"/>
    </location>
</feature>
<feature type="sequence conflict" description="In Ref. 6; CAA26833." evidence="10" ref="6">
    <original>LL</original>
    <variation>FF</variation>
    <location>
        <begin position="578"/>
        <end position="579"/>
    </location>
</feature>
<feature type="sequence conflict" description="In Ref. 1; BAA00027/CAA27816." evidence="10" ref="1">
    <original>A</original>
    <variation>P</variation>
    <location>
        <position position="610"/>
    </location>
</feature>
<feature type="sequence conflict" description="In Ref. 6; CAA26833." evidence="10" ref="6">
    <original>G</original>
    <variation>C</variation>
    <location>
        <position position="713"/>
    </location>
</feature>
<feature type="helix" evidence="26">
    <location>
        <begin position="10"/>
        <end position="13"/>
    </location>
</feature>
<feature type="helix" evidence="26">
    <location>
        <begin position="15"/>
        <end position="17"/>
    </location>
</feature>
<feature type="helix" evidence="26">
    <location>
        <begin position="22"/>
        <end position="38"/>
    </location>
</feature>
<feature type="turn" evidence="26">
    <location>
        <begin position="44"/>
        <end position="46"/>
    </location>
</feature>
<feature type="helix" evidence="26">
    <location>
        <begin position="49"/>
        <end position="62"/>
    </location>
</feature>
<feature type="helix" evidence="26">
    <location>
        <begin position="65"/>
        <end position="78"/>
    </location>
</feature>
<feature type="strand" evidence="26">
    <location>
        <begin position="82"/>
        <end position="86"/>
    </location>
</feature>
<feature type="strand" evidence="26">
    <location>
        <begin position="90"/>
        <end position="93"/>
    </location>
</feature>
<feature type="helix" evidence="26">
    <location>
        <begin position="96"/>
        <end position="102"/>
    </location>
</feature>
<feature type="helix" evidence="26">
    <location>
        <begin position="106"/>
        <end position="115"/>
    </location>
</feature>
<feature type="helix" evidence="26">
    <location>
        <begin position="120"/>
        <end position="124"/>
    </location>
</feature>
<feature type="strand" evidence="26">
    <location>
        <begin position="130"/>
        <end position="132"/>
    </location>
</feature>
<feature type="helix" evidence="26">
    <location>
        <begin position="136"/>
        <end position="150"/>
    </location>
</feature>
<feature type="strand" evidence="26">
    <location>
        <begin position="155"/>
        <end position="160"/>
    </location>
</feature>
<feature type="strand" evidence="26">
    <location>
        <begin position="168"/>
        <end position="172"/>
    </location>
</feature>
<feature type="strand" evidence="26">
    <location>
        <begin position="175"/>
        <end position="179"/>
    </location>
</feature>
<feature type="turn" evidence="26">
    <location>
        <begin position="183"/>
        <end position="186"/>
    </location>
</feature>
<feature type="helix" evidence="26">
    <location>
        <begin position="195"/>
        <end position="197"/>
    </location>
</feature>
<feature type="strand" evidence="26">
    <location>
        <begin position="199"/>
        <end position="209"/>
    </location>
</feature>
<feature type="strand" evidence="26">
    <location>
        <begin position="211"/>
        <end position="232"/>
    </location>
</feature>
<feature type="strand" evidence="26">
    <location>
        <begin position="234"/>
        <end position="237"/>
    </location>
</feature>
<feature type="strand" evidence="26">
    <location>
        <begin position="239"/>
        <end position="248"/>
    </location>
</feature>
<feature type="turn" evidence="25">
    <location>
        <begin position="251"/>
        <end position="254"/>
    </location>
</feature>
<feature type="turn" evidence="19">
    <location>
        <begin position="256"/>
        <end position="258"/>
    </location>
</feature>
<feature type="strand" evidence="18">
    <location>
        <begin position="259"/>
        <end position="261"/>
    </location>
</feature>
<feature type="helix" evidence="26">
    <location>
        <begin position="263"/>
        <end position="268"/>
    </location>
</feature>
<feature type="helix" evidence="26">
    <location>
        <begin position="270"/>
        <end position="274"/>
    </location>
</feature>
<feature type="helix" evidence="26">
    <location>
        <begin position="275"/>
        <end position="277"/>
    </location>
</feature>
<feature type="strand" evidence="23">
    <location>
        <begin position="284"/>
        <end position="286"/>
    </location>
</feature>
<feature type="helix" evidence="26">
    <location>
        <begin position="291"/>
        <end position="313"/>
    </location>
</feature>
<feature type="turn" evidence="18">
    <location>
        <begin position="315"/>
        <end position="319"/>
    </location>
</feature>
<feature type="strand" evidence="20">
    <location>
        <begin position="322"/>
        <end position="325"/>
    </location>
</feature>
<feature type="helix" evidence="26">
    <location>
        <begin position="327"/>
        <end position="329"/>
    </location>
</feature>
<feature type="helix" evidence="26">
    <location>
        <begin position="330"/>
        <end position="333"/>
    </location>
</feature>
<feature type="strand" evidence="26">
    <location>
        <begin position="334"/>
        <end position="341"/>
    </location>
</feature>
<feature type="turn" evidence="26">
    <location>
        <begin position="342"/>
        <end position="345"/>
    </location>
</feature>
<feature type="helix" evidence="26">
    <location>
        <begin position="346"/>
        <end position="356"/>
    </location>
</feature>
<feature type="helix" evidence="26">
    <location>
        <begin position="362"/>
        <end position="372"/>
    </location>
</feature>
<feature type="strand" evidence="26">
    <location>
        <begin position="373"/>
        <end position="376"/>
    </location>
</feature>
<feature type="helix" evidence="26">
    <location>
        <begin position="382"/>
        <end position="384"/>
    </location>
</feature>
<feature type="strand" evidence="26">
    <location>
        <begin position="387"/>
        <end position="389"/>
    </location>
</feature>
<feature type="helix" evidence="26">
    <location>
        <begin position="390"/>
        <end position="396"/>
    </location>
</feature>
<feature type="helix" evidence="26">
    <location>
        <begin position="398"/>
        <end position="418"/>
    </location>
</feature>
<feature type="strand" evidence="24">
    <location>
        <begin position="419"/>
        <end position="421"/>
    </location>
</feature>
<feature type="helix" evidence="26">
    <location>
        <begin position="423"/>
        <end position="429"/>
    </location>
</feature>
<feature type="strand" evidence="26">
    <location>
        <begin position="431"/>
        <end position="433"/>
    </location>
</feature>
<feature type="strand" evidence="26">
    <location>
        <begin position="435"/>
        <end position="437"/>
    </location>
</feature>
<feature type="strand" evidence="26">
    <location>
        <begin position="439"/>
        <end position="441"/>
    </location>
</feature>
<feature type="helix" evidence="26">
    <location>
        <begin position="442"/>
        <end position="448"/>
    </location>
</feature>
<feature type="strand" evidence="26">
    <location>
        <begin position="451"/>
        <end position="457"/>
    </location>
</feature>
<feature type="helix" evidence="26">
    <location>
        <begin position="458"/>
        <end position="466"/>
    </location>
</feature>
<feature type="turn" evidence="26">
    <location>
        <begin position="467"/>
        <end position="469"/>
    </location>
</feature>
<feature type="helix" evidence="26">
    <location>
        <begin position="470"/>
        <end position="475"/>
    </location>
</feature>
<feature type="helix" evidence="26">
    <location>
        <begin position="477"/>
        <end position="479"/>
    </location>
</feature>
<feature type="strand" evidence="26">
    <location>
        <begin position="480"/>
        <end position="482"/>
    </location>
</feature>
<feature type="helix" evidence="26">
    <location>
        <begin position="490"/>
        <end position="495"/>
    </location>
</feature>
<feature type="helix" evidence="26">
    <location>
        <begin position="498"/>
        <end position="508"/>
    </location>
</feature>
<feature type="helix" evidence="26">
    <location>
        <begin position="511"/>
        <end position="514"/>
    </location>
</feature>
<feature type="helix" evidence="26">
    <location>
        <begin position="516"/>
        <end position="525"/>
    </location>
</feature>
<feature type="helix" evidence="26">
    <location>
        <begin position="529"/>
        <end position="554"/>
    </location>
</feature>
<feature type="strand" evidence="26">
    <location>
        <begin position="562"/>
        <end position="569"/>
    </location>
</feature>
<feature type="turn" evidence="26">
    <location>
        <begin position="573"/>
        <end position="576"/>
    </location>
</feature>
<feature type="helix" evidence="26">
    <location>
        <begin position="577"/>
        <end position="593"/>
    </location>
</feature>
<feature type="strand" evidence="26">
    <location>
        <begin position="602"/>
        <end position="607"/>
    </location>
</feature>
<feature type="helix" evidence="26">
    <location>
        <begin position="615"/>
        <end position="631"/>
    </location>
</feature>
<feature type="turn" evidence="26">
    <location>
        <begin position="635"/>
        <end position="637"/>
    </location>
</feature>
<feature type="helix" evidence="26">
    <location>
        <begin position="638"/>
        <end position="640"/>
    </location>
</feature>
<feature type="strand" evidence="26">
    <location>
        <begin position="641"/>
        <end position="646"/>
    </location>
</feature>
<feature type="helix" evidence="26">
    <location>
        <begin position="651"/>
        <end position="657"/>
    </location>
</feature>
<feature type="helix" evidence="26">
    <location>
        <begin position="658"/>
        <end position="660"/>
    </location>
</feature>
<feature type="strand" evidence="26">
    <location>
        <begin position="662"/>
        <end position="666"/>
    </location>
</feature>
<feature type="turn" evidence="22">
    <location>
        <begin position="670"/>
        <end position="672"/>
    </location>
</feature>
<feature type="strand" evidence="21">
    <location>
        <begin position="673"/>
        <end position="675"/>
    </location>
</feature>
<feature type="turn" evidence="24">
    <location>
        <begin position="677"/>
        <end position="679"/>
    </location>
</feature>
<feature type="turn" evidence="26">
    <location>
        <begin position="683"/>
        <end position="686"/>
    </location>
</feature>
<feature type="strand" evidence="26">
    <location>
        <begin position="688"/>
        <end position="691"/>
    </location>
</feature>
<feature type="helix" evidence="26">
    <location>
        <begin position="697"/>
        <end position="704"/>
    </location>
</feature>
<feature type="helix" evidence="26">
    <location>
        <begin position="706"/>
        <end position="708"/>
    </location>
</feature>
<feature type="strand" evidence="26">
    <location>
        <begin position="709"/>
        <end position="711"/>
    </location>
</feature>
<feature type="helix" evidence="26">
    <location>
        <begin position="716"/>
        <end position="725"/>
    </location>
</feature>
<feature type="helix" evidence="26">
    <location>
        <begin position="729"/>
        <end position="735"/>
    </location>
</feature>
<feature type="helix" evidence="26">
    <location>
        <begin position="737"/>
        <end position="748"/>
    </location>
</feature>
<feature type="turn" evidence="26">
    <location>
        <begin position="749"/>
        <end position="751"/>
    </location>
</feature>
<feature type="strand" evidence="18">
    <location>
        <begin position="753"/>
        <end position="755"/>
    </location>
</feature>
<feature type="turn" evidence="26">
    <location>
        <begin position="756"/>
        <end position="759"/>
    </location>
</feature>
<feature type="helix" evidence="26">
    <location>
        <begin position="760"/>
        <end position="768"/>
    </location>
</feature>
<feature type="helix" evidence="26">
    <location>
        <begin position="774"/>
        <end position="792"/>
    </location>
</feature>
<feature type="helix" evidence="26">
    <location>
        <begin position="795"/>
        <end position="806"/>
    </location>
</feature>
<feature type="helix" evidence="26">
    <location>
        <begin position="810"/>
        <end position="812"/>
    </location>
</feature>
<feature type="helix" evidence="26">
    <location>
        <begin position="814"/>
        <end position="824"/>
    </location>
</feature>
<keyword id="KW-0002">3D-structure</keyword>
<keyword id="KW-0007">Acetylation</keyword>
<keyword id="KW-0021">Allosteric enzyme</keyword>
<keyword id="KW-0119">Carbohydrate metabolism</keyword>
<keyword id="KW-0903">Direct protein sequencing</keyword>
<keyword id="KW-0321">Glycogen metabolism</keyword>
<keyword id="KW-0328">Glycosyltransferase</keyword>
<keyword id="KW-0547">Nucleotide-binding</keyword>
<keyword id="KW-0597">Phosphoprotein</keyword>
<keyword id="KW-0663">Pyridoxal phosphate</keyword>
<keyword id="KW-1185">Reference proteome</keyword>
<keyword id="KW-0808">Transferase</keyword>
<organism>
    <name type="scientific">Oryctolagus cuniculus</name>
    <name type="common">Rabbit</name>
    <dbReference type="NCBI Taxonomy" id="9986"/>
    <lineage>
        <taxon>Eukaryota</taxon>
        <taxon>Metazoa</taxon>
        <taxon>Chordata</taxon>
        <taxon>Craniata</taxon>
        <taxon>Vertebrata</taxon>
        <taxon>Euteleostomi</taxon>
        <taxon>Mammalia</taxon>
        <taxon>Eutheria</taxon>
        <taxon>Euarchontoglires</taxon>
        <taxon>Glires</taxon>
        <taxon>Lagomorpha</taxon>
        <taxon>Leporidae</taxon>
        <taxon>Oryctolagus</taxon>
    </lineage>
</organism>
<protein>
    <recommendedName>
        <fullName evidence="11">Glycogen phosphorylase, muscle form</fullName>
        <ecNumber evidence="2">2.4.1.1</ecNumber>
    </recommendedName>
    <alternativeName>
        <fullName>Myophosphorylase</fullName>
    </alternativeName>
</protein>
<reference key="1">
    <citation type="journal article" date="1986" name="FEBS Lett.">
        <title>Complete cDNA sequence for rabbit muscle glycogen phosphorylase.</title>
        <authorList>
            <person name="Nakano K."/>
            <person name="Hwang P.K."/>
            <person name="Fletterick R.J."/>
        </authorList>
    </citation>
    <scope>NUCLEOTIDE SEQUENCE [MRNA]</scope>
    <scope>ACETYLATION AT SER-2</scope>
</reference>
<reference key="2">
    <citation type="journal article" date="1978" name="Biochemistry">
        <title>Sequence of the amino-terminal 349 residues of rabbit muscle glycogen phosphorylase including the sites of covalent and allosteric control.</title>
        <authorList>
            <person name="Koide A."/>
            <person name="Titani K."/>
            <person name="Ericsson L.H."/>
            <person name="Kumar S."/>
            <person name="Neurath H."/>
            <person name="Walsh K.A."/>
        </authorList>
    </citation>
    <scope>PROTEIN SEQUENCE OF 2-351</scope>
</reference>
<reference key="3">
    <citation type="journal article" date="1978" name="Biochemistry">
        <title>Amino acid sequence of two cyanogen bromide fragments of glycogen phosphorylase.</title>
        <authorList>
            <person name="Hermann J."/>
            <person name="Titani K."/>
            <person name="Ericsson L.H."/>
            <person name="Wade R.D."/>
            <person name="Neurath H."/>
            <person name="Walsh K.A."/>
        </authorList>
    </citation>
    <scope>PROTEIN SEQUENCE OF 352-429 AND 443-605</scope>
</reference>
<reference key="4">
    <citation type="journal article" date="1978" name="Biochemistry">
        <title>Sequence of the carboxyl-terminal 492 residues of rabbit muscle glycogen phosphorylase including the pyridoxal 5'-phosphate binding site.</title>
        <authorList>
            <person name="Titani K."/>
            <person name="Koide A."/>
            <person name="Ericsson L.H."/>
            <person name="Kumar S."/>
            <person name="Hermann J."/>
            <person name="Wade R.D."/>
            <person name="Walsh K.A."/>
            <person name="Neurath H."/>
            <person name="Fischer E.H."/>
        </authorList>
    </citation>
    <scope>PROTEIN SEQUENCE OF 352-843</scope>
</reference>
<reference key="5">
    <citation type="journal article" date="1978" name="J. Biol. Chem.">
        <title>Inactivation of phosphorylase b by potassium ferrate. Identification of a tyrosine residue involved in the binding of adenosine 5'-monophosphate.</title>
        <authorList>
            <person name="Lee Y.M."/>
            <person name="Benisek W.F."/>
        </authorList>
    </citation>
    <scope>PROTEIN SEQUENCE OF 71-81</scope>
</reference>
<reference key="6">
    <citation type="journal article" date="1985" name="Eur. J. Biochem.">
        <title>Comparative sequence analysis of rat, rabbit, and human muscle glycogen phosphorylase cDNAs.</title>
        <authorList>
            <person name="Hwang P.K."/>
            <person name="See Y.P."/>
            <person name="Vincentini A.M."/>
            <person name="Powers M.A."/>
            <person name="Fletterick R.J."/>
            <person name="Crerar M.M."/>
        </authorList>
    </citation>
    <scope>NUCLEOTIDE SEQUENCE [MRNA] OF 575-843</scope>
</reference>
<reference key="7">
    <citation type="journal article" date="1978" name="Biochemistry">
        <title>Crystallographic analysis of phosphorylase alpha at 2.5-A resolution, a comment on the chemical sequence.</title>
        <authorList>
            <person name="Sprang S.R."/>
            <person name="Fletterick R.J."/>
        </authorList>
    </citation>
    <scope>X-RAY CRYSTALLOGRAPHY (2.5 ANGSTROMS) OF PHOSPHORYLASE A</scope>
</reference>
<reference key="8">
    <citation type="journal article" date="1989" name="Science">
        <title>Domain separation in the activation of glycogen phosphorylase a.</title>
        <authorList>
            <person name="Goldsmith E.J."/>
            <person name="Sprang S.R."/>
            <person name="Hamlin R."/>
            <person name="Xuong N.-H."/>
            <person name="Fletterick R.J."/>
        </authorList>
    </citation>
    <scope>X-RAY CRYSTALLOGRAPHY (2.8 ANGSTROMS) OF PHOSPHORYLASE A</scope>
</reference>
<reference key="9">
    <citation type="journal article" date="1987" name="Science">
        <title>Structure of the nucleotide activation switch in glycogen phosphorylase a.</title>
        <authorList>
            <person name="Sprang S.R."/>
            <person name="Goldsmith E.J."/>
            <person name="Fletterick R.J."/>
        </authorList>
    </citation>
    <scope>X-RAY CRYSTALLOGRAPHY (2.5 ANGSTROMS) OF PHOSPHORYLASE A WITH AMP</scope>
</reference>
<reference key="10">
    <citation type="journal article" date="1978" name="Biochemistry">
        <title>Assignment of the amino acid sequence to the crystal structure of glycogen phosphorylase b.</title>
        <authorList>
            <person name="Jenkins J.A."/>
            <person name="Johnson L.N."/>
            <person name="Wilson K.S."/>
        </authorList>
    </citation>
    <scope>X-RAY CRYSTALLOGRAPHY (3.0 ANGSTROMS) OF PHOSPHORYLASE B</scope>
</reference>
<reference evidence="14" key="11">
    <citation type="journal article" date="1995" name="J. Mol. Biol.">
        <title>The binding of 2-deoxy-D-glucose 6-phosphate to glycogen phosphorylase b: kinetic and crystallographic studies.</title>
        <authorList>
            <person name="Oikonomakos N.G."/>
            <person name="Zographos S.E."/>
            <person name="Johnson L.N."/>
            <person name="Papageorgiou A.C."/>
            <person name="Acharya K.R."/>
        </authorList>
    </citation>
    <scope>X-RAY CRYSTALLOGRAPHY (2.3 ANGSTROMS) OF PHOSPHORYLASE B</scope>
</reference>
<reference evidence="15 16 17" key="12">
    <citation type="journal article" date="1996" name="Protein Sci.">
        <title>Activator anion binding site in pyridoxal phosphorylase b: the binding of phosphite, phosphate, and fluorophosphate in the crystal.</title>
        <authorList>
            <person name="Oikonomakos N.G."/>
            <person name="Zographos S.E."/>
            <person name="Tsitsanou K.E."/>
            <person name="Johnson L.N."/>
            <person name="Acharya K.R."/>
        </authorList>
    </citation>
    <scope>X-RAY CRYSTALLOGRAPHY (2.4 ANGSTROMS) OF PHOSPHORYLASE B</scope>
</reference>
<reference evidence="12 13" key="13">
    <citation type="journal article" date="1998" name="Protein Sci.">
        <title>The structure of a glycogen phosphorylase glucopyranose spirohydantoin complex at 1.8-A resolution and 100 K: the role of the water structure and its contribution to binding.</title>
        <authorList>
            <person name="Gregoriou M."/>
            <person name="Noble M.E.M."/>
            <person name="Watson K.A."/>
            <person name="Garman E.F."/>
            <person name="Krulle T.M."/>
            <person name="de la Fuente C."/>
            <person name="Fleet G.W."/>
            <person name="Oikonomakos N.G."/>
            <person name="Johnson L.N."/>
        </authorList>
    </citation>
    <scope>X-RAY CRYSTALLOGRAPHY (1.99 ANGSTROMS) OF PHOSPHORYLASE B</scope>
</reference>
<name>PYGM_RABIT</name>